<feature type="chain" id="PRO_1000193660" description="Gamma-glutamyl phosphate reductase">
    <location>
        <begin position="1"/>
        <end position="420"/>
    </location>
</feature>
<comment type="function">
    <text evidence="1">Catalyzes the NADPH-dependent reduction of L-glutamate 5-phosphate into L-glutamate 5-semialdehyde and phosphate. The product spontaneously undergoes cyclization to form 1-pyrroline-5-carboxylate.</text>
</comment>
<comment type="catalytic activity">
    <reaction evidence="1">
        <text>L-glutamate 5-semialdehyde + phosphate + NADP(+) = L-glutamyl 5-phosphate + NADPH + H(+)</text>
        <dbReference type="Rhea" id="RHEA:19541"/>
        <dbReference type="ChEBI" id="CHEBI:15378"/>
        <dbReference type="ChEBI" id="CHEBI:43474"/>
        <dbReference type="ChEBI" id="CHEBI:57783"/>
        <dbReference type="ChEBI" id="CHEBI:58066"/>
        <dbReference type="ChEBI" id="CHEBI:58274"/>
        <dbReference type="ChEBI" id="CHEBI:58349"/>
        <dbReference type="EC" id="1.2.1.41"/>
    </reaction>
</comment>
<comment type="pathway">
    <text evidence="1">Amino-acid biosynthesis; L-proline biosynthesis; L-glutamate 5-semialdehyde from L-glutamate: step 2/2.</text>
</comment>
<comment type="subcellular location">
    <subcellularLocation>
        <location evidence="1">Cytoplasm</location>
    </subcellularLocation>
</comment>
<comment type="similarity">
    <text evidence="1">Belongs to the gamma-glutamyl phosphate reductase family.</text>
</comment>
<dbReference type="EC" id="1.2.1.41" evidence="1"/>
<dbReference type="EMBL" id="CP000919">
    <property type="protein sequence ID" value="ACO19825.1"/>
    <property type="molecule type" value="Genomic_DNA"/>
</dbReference>
<dbReference type="RefSeq" id="WP_000254683.1">
    <property type="nucleotide sequence ID" value="NC_012466.1"/>
</dbReference>
<dbReference type="SMR" id="C1CDS9"/>
<dbReference type="KEGG" id="sjj:SPJ_0872"/>
<dbReference type="HOGENOM" id="CLU_030231_0_0_9"/>
<dbReference type="UniPathway" id="UPA00098">
    <property type="reaction ID" value="UER00360"/>
</dbReference>
<dbReference type="Proteomes" id="UP000002206">
    <property type="component" value="Chromosome"/>
</dbReference>
<dbReference type="GO" id="GO:0005737">
    <property type="term" value="C:cytoplasm"/>
    <property type="evidence" value="ECO:0007669"/>
    <property type="project" value="UniProtKB-SubCell"/>
</dbReference>
<dbReference type="GO" id="GO:0004350">
    <property type="term" value="F:glutamate-5-semialdehyde dehydrogenase activity"/>
    <property type="evidence" value="ECO:0007669"/>
    <property type="project" value="UniProtKB-UniRule"/>
</dbReference>
<dbReference type="GO" id="GO:0050661">
    <property type="term" value="F:NADP binding"/>
    <property type="evidence" value="ECO:0007669"/>
    <property type="project" value="InterPro"/>
</dbReference>
<dbReference type="GO" id="GO:0055129">
    <property type="term" value="P:L-proline biosynthetic process"/>
    <property type="evidence" value="ECO:0007669"/>
    <property type="project" value="UniProtKB-UniRule"/>
</dbReference>
<dbReference type="CDD" id="cd07079">
    <property type="entry name" value="ALDH_F18-19_ProA-GPR"/>
    <property type="match status" value="1"/>
</dbReference>
<dbReference type="FunFam" id="3.40.309.10:FF:000006">
    <property type="entry name" value="Gamma-glutamyl phosphate reductase"/>
    <property type="match status" value="1"/>
</dbReference>
<dbReference type="Gene3D" id="3.40.605.10">
    <property type="entry name" value="Aldehyde Dehydrogenase, Chain A, domain 1"/>
    <property type="match status" value="1"/>
</dbReference>
<dbReference type="Gene3D" id="3.40.309.10">
    <property type="entry name" value="Aldehyde Dehydrogenase, Chain A, domain 2"/>
    <property type="match status" value="1"/>
</dbReference>
<dbReference type="HAMAP" id="MF_00412">
    <property type="entry name" value="ProA"/>
    <property type="match status" value="1"/>
</dbReference>
<dbReference type="InterPro" id="IPR016161">
    <property type="entry name" value="Ald_DH/histidinol_DH"/>
</dbReference>
<dbReference type="InterPro" id="IPR016163">
    <property type="entry name" value="Ald_DH_C"/>
</dbReference>
<dbReference type="InterPro" id="IPR016162">
    <property type="entry name" value="Ald_DH_N"/>
</dbReference>
<dbReference type="InterPro" id="IPR015590">
    <property type="entry name" value="Aldehyde_DH_dom"/>
</dbReference>
<dbReference type="InterPro" id="IPR020593">
    <property type="entry name" value="G-glutamylP_reductase_CS"/>
</dbReference>
<dbReference type="InterPro" id="IPR012134">
    <property type="entry name" value="Glu-5-SA_DH"/>
</dbReference>
<dbReference type="InterPro" id="IPR000965">
    <property type="entry name" value="GPR_dom"/>
</dbReference>
<dbReference type="NCBIfam" id="NF001221">
    <property type="entry name" value="PRK00197.1"/>
    <property type="match status" value="1"/>
</dbReference>
<dbReference type="NCBIfam" id="TIGR00407">
    <property type="entry name" value="proA"/>
    <property type="match status" value="1"/>
</dbReference>
<dbReference type="PANTHER" id="PTHR11063:SF8">
    <property type="entry name" value="DELTA-1-PYRROLINE-5-CARBOXYLATE SYNTHASE"/>
    <property type="match status" value="1"/>
</dbReference>
<dbReference type="PANTHER" id="PTHR11063">
    <property type="entry name" value="GLUTAMATE SEMIALDEHYDE DEHYDROGENASE"/>
    <property type="match status" value="1"/>
</dbReference>
<dbReference type="Pfam" id="PF00171">
    <property type="entry name" value="Aldedh"/>
    <property type="match status" value="1"/>
</dbReference>
<dbReference type="PIRSF" id="PIRSF000151">
    <property type="entry name" value="GPR"/>
    <property type="match status" value="1"/>
</dbReference>
<dbReference type="SUPFAM" id="SSF53720">
    <property type="entry name" value="ALDH-like"/>
    <property type="match status" value="1"/>
</dbReference>
<dbReference type="PROSITE" id="PS01223">
    <property type="entry name" value="PROA"/>
    <property type="match status" value="1"/>
</dbReference>
<protein>
    <recommendedName>
        <fullName evidence="1">Gamma-glutamyl phosphate reductase</fullName>
        <shortName evidence="1">GPR</shortName>
        <ecNumber evidence="1">1.2.1.41</ecNumber>
    </recommendedName>
    <alternativeName>
        <fullName evidence="1">Glutamate-5-semialdehyde dehydrogenase</fullName>
    </alternativeName>
    <alternativeName>
        <fullName evidence="1">Glutamyl-gamma-semialdehyde dehydrogenase</fullName>
        <shortName evidence="1">GSA dehydrogenase</shortName>
    </alternativeName>
</protein>
<reference key="1">
    <citation type="journal article" date="2010" name="Genome Biol.">
        <title>Structure and dynamics of the pan-genome of Streptococcus pneumoniae and closely related species.</title>
        <authorList>
            <person name="Donati C."/>
            <person name="Hiller N.L."/>
            <person name="Tettelin H."/>
            <person name="Muzzi A."/>
            <person name="Croucher N.J."/>
            <person name="Angiuoli S.V."/>
            <person name="Oggioni M."/>
            <person name="Dunning Hotopp J.C."/>
            <person name="Hu F.Z."/>
            <person name="Riley D.R."/>
            <person name="Covacci A."/>
            <person name="Mitchell T.J."/>
            <person name="Bentley S.D."/>
            <person name="Kilian M."/>
            <person name="Ehrlich G.D."/>
            <person name="Rappuoli R."/>
            <person name="Moxon E.R."/>
            <person name="Masignani V."/>
        </authorList>
    </citation>
    <scope>NUCLEOTIDE SEQUENCE [LARGE SCALE GENOMIC DNA]</scope>
    <source>
        <strain>JJA</strain>
    </source>
</reference>
<proteinExistence type="inferred from homology"/>
<keyword id="KW-0028">Amino-acid biosynthesis</keyword>
<keyword id="KW-0963">Cytoplasm</keyword>
<keyword id="KW-0521">NADP</keyword>
<keyword id="KW-0560">Oxidoreductase</keyword>
<keyword id="KW-0641">Proline biosynthesis</keyword>
<evidence type="ECO:0000255" key="1">
    <source>
        <dbReference type="HAMAP-Rule" id="MF_00412"/>
    </source>
</evidence>
<gene>
    <name evidence="1" type="primary">proA</name>
    <name type="ordered locus">SPJ_0872</name>
</gene>
<accession>C1CDS9</accession>
<organism>
    <name type="scientific">Streptococcus pneumoniae (strain JJA)</name>
    <dbReference type="NCBI Taxonomy" id="488222"/>
    <lineage>
        <taxon>Bacteria</taxon>
        <taxon>Bacillati</taxon>
        <taxon>Bacillota</taxon>
        <taxon>Bacilli</taxon>
        <taxon>Lactobacillales</taxon>
        <taxon>Streptococcaceae</taxon>
        <taxon>Streptococcus</taxon>
    </lineage>
</organism>
<name>PROA_STRZJ</name>
<sequence length="420" mass="45224">MVSRQEQFEQVQAVKKSINTASEEVKNQALLAMADHLVAATEEILAANALDMAAAKGKISDVMLDRLYLDADRIEAMARGIREVVALPDPIGEVLETSQLENGLVITKKRVAMGVIGIIYESRPNVTSDAAALTLKSGNAVVLRSGKDAYQTTHAIVTALKKGLETTTIHPNVIQLVEDTSRESSYAMMKAKGYLDLLIPRGGAGLINAVVENAIVPVIETGTGIVHVYVDKDADEDKALSIINNAKTSRPSVCNAMEVLLVHENKAASFLPRLEQVLVAERKEAGLEPIQFRLDSKASQFVSGQAAQAQDFDTEFLDYILAVKVVSSLEEAVAHIESHSTHHSDAIVTENAEAAAYFTDQVDSAAVYVNASTRFTDGGQFGLGCEMGISTQKLHARGPMGLKELTSYKYVVAGDGQIRE</sequence>